<sequence>MIFYLVLLVLGAIAFYVHFSNNRKKLIERLEIVAQRRRDDLSKNVEQARKAADKLDTQRRDWIGSLDFEQLRDELQRGHVTCVEAIRAYFHKAILAHEKTNAVTCFILDAERQAEELDEQAKLPYYVKPPLFGVPLSLKECLKVKGYDTTRGFVQDAYHPATEDSIQVEHYKKLGLIPFCQTNVPQSLLSYNCSNPLFGTTTNPYDSTRTCGGSSGGEGALIGAGGSLIGIGTDVGGSVRIPCHFTGTAGIKPSKMRFAHRGGGASVPGKPLIDANDGPMAKDVKTNVEFLRNVWGDIDFQSDRDPYCPPVHWNESVYSSEKKLRVGYYIDDGWFTPTPALQRAVLESKKHLEAAGHTVIPFYPPRLPSVMQLYFRAVCLDGGQYVLNKLLKDIIEPTIRFQVTLWMVPVWIQRILSYPVSLVFPRMGMLMQSLTRDTFELREAYADIEAYREEFVGLMMKDNLDVILCPASIMPAPQHDIPSKVVSGVSYTCLYNLLDFGAGVVPVTAVSKSDEEKLINEYPETDKWYQITKKATLGAVGMPIGVQVAAPPYREEAVLRTMREIEIAVTGK</sequence>
<proteinExistence type="evidence at protein level"/>
<gene>
    <name evidence="9" type="primary">faah-1</name>
    <name evidence="9" type="ORF">B0218.1</name>
</gene>
<protein>
    <recommendedName>
        <fullName>Fatty acid amide hydrolase 1</fullName>
        <ecNumber evidence="5 7">3.5.1.99</ecNumber>
    </recommendedName>
    <alternativeName>
        <fullName>Anandamide amidohydrolase 1</fullName>
    </alternativeName>
</protein>
<dbReference type="EC" id="3.5.1.99" evidence="5 7"/>
<dbReference type="EMBL" id="BX284604">
    <property type="protein sequence ID" value="CCD61383.1"/>
    <property type="molecule type" value="Genomic_DNA"/>
</dbReference>
<dbReference type="PIR" id="T29753">
    <property type="entry name" value="T29753"/>
</dbReference>
<dbReference type="RefSeq" id="NP_501368.1">
    <property type="nucleotide sequence ID" value="NM_068967.8"/>
</dbReference>
<dbReference type="SMR" id="Q17449"/>
<dbReference type="BioGRID" id="42726">
    <property type="interactions" value="1"/>
</dbReference>
<dbReference type="FunCoup" id="Q17449">
    <property type="interactions" value="104"/>
</dbReference>
<dbReference type="STRING" id="6239.B0218.1.4"/>
<dbReference type="SwissLipids" id="SLP:000000044"/>
<dbReference type="PaxDb" id="6239-B0218.1a.4"/>
<dbReference type="PeptideAtlas" id="Q17449"/>
<dbReference type="EnsemblMetazoa" id="B0218.1.1">
    <property type="protein sequence ID" value="B0218.1.1"/>
    <property type="gene ID" value="WBGene00015047"/>
</dbReference>
<dbReference type="EnsemblMetazoa" id="B0218.1.2">
    <property type="protein sequence ID" value="B0218.1.2"/>
    <property type="gene ID" value="WBGene00015047"/>
</dbReference>
<dbReference type="EnsemblMetazoa" id="B0218.1.3">
    <property type="protein sequence ID" value="B0218.1.3"/>
    <property type="gene ID" value="WBGene00015047"/>
</dbReference>
<dbReference type="GeneID" id="177613"/>
<dbReference type="KEGG" id="cel:CELE_B0218.1"/>
<dbReference type="UCSC" id="B0218.1a.1">
    <property type="organism name" value="c. elegans"/>
</dbReference>
<dbReference type="AGR" id="WB:WBGene00015047"/>
<dbReference type="CTD" id="177613"/>
<dbReference type="WormBase" id="B0218.1">
    <property type="protein sequence ID" value="CE06684"/>
    <property type="gene ID" value="WBGene00015047"/>
    <property type="gene designation" value="faah-1"/>
</dbReference>
<dbReference type="eggNOG" id="KOG1212">
    <property type="taxonomic scope" value="Eukaryota"/>
</dbReference>
<dbReference type="GeneTree" id="ENSGT00970000196322"/>
<dbReference type="HOGENOM" id="CLU_009600_9_3_1"/>
<dbReference type="InParanoid" id="Q17449"/>
<dbReference type="OMA" id="EPWRPEM"/>
<dbReference type="OrthoDB" id="6428749at2759"/>
<dbReference type="PhylomeDB" id="Q17449"/>
<dbReference type="Reactome" id="R-CEL-2142753">
    <property type="pathway name" value="Arachidonate metabolism"/>
</dbReference>
<dbReference type="PRO" id="PR:Q17449"/>
<dbReference type="Proteomes" id="UP000001940">
    <property type="component" value="Chromosome IV"/>
</dbReference>
<dbReference type="Bgee" id="WBGene00015047">
    <property type="expression patterns" value="Expressed in larva and 4 other cell types or tissues"/>
</dbReference>
<dbReference type="GO" id="GO:0004040">
    <property type="term" value="F:amidase activity"/>
    <property type="evidence" value="ECO:0000318"/>
    <property type="project" value="GO_Central"/>
</dbReference>
<dbReference type="GO" id="GO:0017064">
    <property type="term" value="F:fatty acid amide hydrolase activity"/>
    <property type="evidence" value="ECO:0000318"/>
    <property type="project" value="GO_Central"/>
</dbReference>
<dbReference type="GO" id="GO:0009062">
    <property type="term" value="P:fatty acid catabolic process"/>
    <property type="evidence" value="ECO:0000318"/>
    <property type="project" value="GO_Central"/>
</dbReference>
<dbReference type="GO" id="GO:0048680">
    <property type="term" value="P:positive regulation of axon regeneration"/>
    <property type="evidence" value="ECO:0000315"/>
    <property type="project" value="UniProtKB"/>
</dbReference>
<dbReference type="FunFam" id="3.90.1300.10:FF:000001">
    <property type="entry name" value="Fatty-acid amide hydrolase 1"/>
    <property type="match status" value="1"/>
</dbReference>
<dbReference type="Gene3D" id="3.90.1300.10">
    <property type="entry name" value="Amidase signature (AS) domain"/>
    <property type="match status" value="1"/>
</dbReference>
<dbReference type="InterPro" id="IPR020556">
    <property type="entry name" value="Amidase_CS"/>
</dbReference>
<dbReference type="InterPro" id="IPR023631">
    <property type="entry name" value="Amidase_dom"/>
</dbReference>
<dbReference type="InterPro" id="IPR036928">
    <property type="entry name" value="AS_sf"/>
</dbReference>
<dbReference type="InterPro" id="IPR052096">
    <property type="entry name" value="Endocannabinoid_amidase"/>
</dbReference>
<dbReference type="PANTHER" id="PTHR45847">
    <property type="entry name" value="FATTY ACID AMIDE HYDROLASE"/>
    <property type="match status" value="1"/>
</dbReference>
<dbReference type="PANTHER" id="PTHR45847:SF10">
    <property type="entry name" value="FATTY ACID AMIDE HYDROLASE 1"/>
    <property type="match status" value="1"/>
</dbReference>
<dbReference type="Pfam" id="PF01425">
    <property type="entry name" value="Amidase"/>
    <property type="match status" value="1"/>
</dbReference>
<dbReference type="PIRSF" id="PIRSF001221">
    <property type="entry name" value="Amidase_fungi"/>
    <property type="match status" value="1"/>
</dbReference>
<dbReference type="SUPFAM" id="SSF75304">
    <property type="entry name" value="Amidase signature (AS) enzymes"/>
    <property type="match status" value="1"/>
</dbReference>
<dbReference type="PROSITE" id="PS00571">
    <property type="entry name" value="AMIDASES"/>
    <property type="match status" value="1"/>
</dbReference>
<comment type="function">
    <text evidence="2 5 6 7">Catalyzes the hydrolysis of endogenous amidated lipids like anandamide (AEA or N-(5Z,8Z,11Z,14Z-eicosatetraenoyl)-ethanolamine) and eicosapentaneoyl ethanolamide (EPEA or (5Z,8Z,11Z,14Z,17Z-eicosapentaenoyl) ethanolamine), as well as other fatty amides, to their corresponding fatty acids, thereby regulating the signaling functions of these molecules (PubMed:21562563, PubMed:30911178). EPEA promotes dauer formation and may constitute a signal of high nutrient availability (PubMed:21562563). Breakdown of EPEA may promote lifespan extension when nutrient availability is high (PubMed:21562563). Facilitates axon regeneration after injury by degradating inhibitory compounds such as AEA (PubMed:23072806). FAAH cooperates with PM20D1 in the hydrolysis of amino acid-conjugated fatty acids such as N-fatty acyl glycine and N-fatty acyl-L-serine, thereby acting as a physiological regulator of specific subsets of intracellular, but not of extracellular, N-fatty acyl amino acids (By similarity).</text>
</comment>
<comment type="catalytic activity">
    <reaction evidence="5 7">
        <text>N-(5Z,8Z,11Z,14Z-eicosatetraenoyl)-ethanolamine + H2O = ethanolamine + (5Z,8Z,11Z,14Z)-eicosatetraenoate</text>
        <dbReference type="Rhea" id="RHEA:26136"/>
        <dbReference type="ChEBI" id="CHEBI:2700"/>
        <dbReference type="ChEBI" id="CHEBI:15377"/>
        <dbReference type="ChEBI" id="CHEBI:32395"/>
        <dbReference type="ChEBI" id="CHEBI:57603"/>
        <dbReference type="EC" id="3.5.1.99"/>
    </reaction>
    <physiologicalReaction direction="left-to-right" evidence="5 7">
        <dbReference type="Rhea" id="RHEA:26137"/>
    </physiologicalReaction>
</comment>
<comment type="catalytic activity">
    <reaction evidence="3">
        <text>(9Z)-octadecenamide + H2O = (9Z)-octadecenoate + NH4(+)</text>
        <dbReference type="Rhea" id="RHEA:26506"/>
        <dbReference type="ChEBI" id="CHEBI:15377"/>
        <dbReference type="ChEBI" id="CHEBI:28938"/>
        <dbReference type="ChEBI" id="CHEBI:30823"/>
        <dbReference type="ChEBI" id="CHEBI:116314"/>
        <dbReference type="EC" id="3.5.1.99"/>
    </reaction>
    <physiologicalReaction direction="left-to-right" evidence="3">
        <dbReference type="Rhea" id="RHEA:26507"/>
    </physiologicalReaction>
</comment>
<comment type="catalytic activity">
    <reaction evidence="5">
        <text>(5Z,8Z,11Z,14Z,17Z-eicosapentaenoyl) ethanolamine + H2O = (5Z,8Z,11Z,14Z,17Z)-eicosapentaenoate + ethanolamine</text>
        <dbReference type="Rhea" id="RHEA:35519"/>
        <dbReference type="ChEBI" id="CHEBI:15377"/>
        <dbReference type="ChEBI" id="CHEBI:57603"/>
        <dbReference type="ChEBI" id="CHEBI:58562"/>
        <dbReference type="ChEBI" id="CHEBI:71467"/>
    </reaction>
    <physiologicalReaction direction="left-to-right" evidence="5">
        <dbReference type="Rhea" id="RHEA:35520"/>
    </physiologicalReaction>
</comment>
<comment type="catalytic activity">
    <reaction evidence="5">
        <text>N-(9Z-hexadecenoyl) ethanolamine + H2O = (9Z)-hexadecenoate + ethanolamine</text>
        <dbReference type="Rhea" id="RHEA:35563"/>
        <dbReference type="ChEBI" id="CHEBI:15377"/>
        <dbReference type="ChEBI" id="CHEBI:32372"/>
        <dbReference type="ChEBI" id="CHEBI:57603"/>
        <dbReference type="ChEBI" id="CHEBI:71465"/>
    </reaction>
    <physiologicalReaction direction="left-to-right" evidence="5">
        <dbReference type="Rhea" id="RHEA:35564"/>
    </physiologicalReaction>
</comment>
<comment type="catalytic activity">
    <reaction evidence="5">
        <text>N-(9Z-octadecenoyl) ethanolamine + H2O = ethanolamine + (9Z)-octadecenoate</text>
        <dbReference type="Rhea" id="RHEA:45060"/>
        <dbReference type="ChEBI" id="CHEBI:15377"/>
        <dbReference type="ChEBI" id="CHEBI:30823"/>
        <dbReference type="ChEBI" id="CHEBI:57603"/>
        <dbReference type="ChEBI" id="CHEBI:71466"/>
    </reaction>
    <physiologicalReaction direction="left-to-right" evidence="5">
        <dbReference type="Rhea" id="RHEA:45061"/>
    </physiologicalReaction>
</comment>
<comment type="catalytic activity">
    <reaction evidence="2">
        <text>N-octadecanoyl ethanolamine + H2O = octadecanoate + ethanolamine</text>
        <dbReference type="Rhea" id="RHEA:63124"/>
        <dbReference type="ChEBI" id="CHEBI:15377"/>
        <dbReference type="ChEBI" id="CHEBI:25629"/>
        <dbReference type="ChEBI" id="CHEBI:57603"/>
        <dbReference type="ChEBI" id="CHEBI:85299"/>
    </reaction>
    <physiologicalReaction direction="left-to-right" evidence="2">
        <dbReference type="Rhea" id="RHEA:63125"/>
    </physiologicalReaction>
</comment>
<comment type="catalytic activity">
    <reaction evidence="2">
        <text>N-docosanoyl-ethanolamine + H2O = docosanoate + ethanolamine</text>
        <dbReference type="Rhea" id="RHEA:63128"/>
        <dbReference type="ChEBI" id="CHEBI:15377"/>
        <dbReference type="ChEBI" id="CHEBI:23858"/>
        <dbReference type="ChEBI" id="CHEBI:57603"/>
        <dbReference type="ChEBI" id="CHEBI:146186"/>
    </reaction>
    <physiologicalReaction direction="left-to-right" evidence="2">
        <dbReference type="Rhea" id="RHEA:63129"/>
    </physiologicalReaction>
</comment>
<comment type="catalytic activity">
    <reaction evidence="2">
        <text>N-(15Z-tetracosenoyl)-ethanolamine + H2O = (15Z)-tetracosenoate + ethanolamine</text>
        <dbReference type="Rhea" id="RHEA:63144"/>
        <dbReference type="ChEBI" id="CHEBI:15377"/>
        <dbReference type="ChEBI" id="CHEBI:32392"/>
        <dbReference type="ChEBI" id="CHEBI:57603"/>
        <dbReference type="ChEBI" id="CHEBI:146187"/>
    </reaction>
    <physiologicalReaction direction="left-to-right" evidence="2">
        <dbReference type="Rhea" id="RHEA:63145"/>
    </physiologicalReaction>
</comment>
<comment type="catalytic activity">
    <reaction evidence="5">
        <text>N-hexadecanoylethanolamine + H2O = ethanolamine + hexadecanoate</text>
        <dbReference type="Rhea" id="RHEA:45064"/>
        <dbReference type="ChEBI" id="CHEBI:7896"/>
        <dbReference type="ChEBI" id="CHEBI:15377"/>
        <dbReference type="ChEBI" id="CHEBI:57603"/>
        <dbReference type="ChEBI" id="CHEBI:71464"/>
    </reaction>
    <physiologicalReaction direction="left-to-right" evidence="5">
        <dbReference type="Rhea" id="RHEA:45065"/>
    </physiologicalReaction>
</comment>
<comment type="catalytic activity">
    <reaction evidence="5">
        <text>N-(9Z,12Z-octadecadienoyl)-ethanolamine + H2O = ethanolamine + (9Z,12Z)-octadecadienoate</text>
        <dbReference type="Rhea" id="RHEA:35567"/>
        <dbReference type="ChEBI" id="CHEBI:15377"/>
        <dbReference type="ChEBI" id="CHEBI:30245"/>
        <dbReference type="ChEBI" id="CHEBI:57603"/>
        <dbReference type="ChEBI" id="CHEBI:64032"/>
    </reaction>
    <physiologicalReaction direction="left-to-right" evidence="5">
        <dbReference type="Rhea" id="RHEA:35568"/>
    </physiologicalReaction>
</comment>
<comment type="catalytic activity">
    <reaction evidence="2">
        <text>(9Z)-octadecenoate + glycine = N-(9Z-octadecenoyl)glycine + H2O</text>
        <dbReference type="Rhea" id="RHEA:51316"/>
        <dbReference type="ChEBI" id="CHEBI:15377"/>
        <dbReference type="ChEBI" id="CHEBI:30823"/>
        <dbReference type="ChEBI" id="CHEBI:57305"/>
        <dbReference type="ChEBI" id="CHEBI:133992"/>
    </reaction>
    <physiologicalReaction direction="right-to-left" evidence="2">
        <dbReference type="Rhea" id="RHEA:51318"/>
    </physiologicalReaction>
</comment>
<comment type="catalytic activity">
    <reaction evidence="2">
        <text>N-(5Z,8Z,11Z,14Z)-eicosatetraenoyl-glycine + H2O = (5Z,8Z,11Z,14Z)-eicosatetraenoate + glycine</text>
        <dbReference type="Rhea" id="RHEA:64108"/>
        <dbReference type="ChEBI" id="CHEBI:15377"/>
        <dbReference type="ChEBI" id="CHEBI:32395"/>
        <dbReference type="ChEBI" id="CHEBI:57305"/>
        <dbReference type="ChEBI" id="CHEBI:59002"/>
    </reaction>
    <physiologicalReaction direction="left-to-right" evidence="2">
        <dbReference type="Rhea" id="RHEA:64109"/>
    </physiologicalReaction>
</comment>
<comment type="catalytic activity">
    <reaction evidence="2">
        <text>N-(5Z,8Z,11Z,14Z-eicosatetraenoyl)-L-serine + H2O = (5Z,8Z,11Z,14Z)-eicosatetraenoate + L-serine</text>
        <dbReference type="Rhea" id="RHEA:64116"/>
        <dbReference type="ChEBI" id="CHEBI:15377"/>
        <dbReference type="ChEBI" id="CHEBI:32395"/>
        <dbReference type="ChEBI" id="CHEBI:33384"/>
        <dbReference type="ChEBI" id="CHEBI:149697"/>
    </reaction>
    <physiologicalReaction direction="left-to-right" evidence="2">
        <dbReference type="Rhea" id="RHEA:64117"/>
    </physiologicalReaction>
</comment>
<comment type="biophysicochemical properties">
    <kinetics>
        <Vmax evidence="7">18.3 pmol/min/mg enzyme for the hydrolysis of arachidonoyl ethanolamide (N-(5Z,8Z,11Z,14Z-eicosatetraenoyl)-ethanolamine) (at 37 degrees Celsius)</Vmax>
    </kinetics>
</comment>
<comment type="tissue specificity">
    <text evidence="5 6">Expressed in the pharynx, some pharyngeal neurons, the posterior intestine and anal depressor muscles.</text>
</comment>
<comment type="disruption phenotype">
    <text evidence="6">Viable. Reduction (50 percent) in the frequency of motoneuron axon regeneration in young adults but not in L4 larvae.</text>
</comment>
<comment type="similarity">
    <text evidence="8">Belongs to the amidase family.</text>
</comment>
<name>FAAH1_CAEEL</name>
<evidence type="ECO:0000250" key="1"/>
<evidence type="ECO:0000250" key="2">
    <source>
        <dbReference type="UniProtKB" id="O08914"/>
    </source>
</evidence>
<evidence type="ECO:0000250" key="3">
    <source>
        <dbReference type="UniProtKB" id="P97612"/>
    </source>
</evidence>
<evidence type="ECO:0000255" key="4"/>
<evidence type="ECO:0000269" key="5">
    <source>
    </source>
</evidence>
<evidence type="ECO:0000269" key="6">
    <source>
    </source>
</evidence>
<evidence type="ECO:0000269" key="7">
    <source>
    </source>
</evidence>
<evidence type="ECO:0000305" key="8"/>
<evidence type="ECO:0000312" key="9">
    <source>
        <dbReference type="WormBase" id="B0218.1"/>
    </source>
</evidence>
<feature type="signal peptide" evidence="4">
    <location>
        <begin position="1"/>
        <end position="14"/>
    </location>
</feature>
<feature type="chain" id="PRO_0000421279" description="Fatty acid amide hydrolase 1">
    <location>
        <begin position="15"/>
        <end position="572"/>
    </location>
</feature>
<feature type="coiled-coil region" evidence="4">
    <location>
        <begin position="32"/>
        <end position="63"/>
    </location>
</feature>
<feature type="active site" description="Charge relay system" evidence="3">
    <location>
        <position position="139"/>
    </location>
</feature>
<feature type="active site" description="Charge relay system" evidence="3">
    <location>
        <position position="214"/>
    </location>
</feature>
<feature type="active site" description="Acyl-ester intermediate" evidence="3">
    <location>
        <position position="238"/>
    </location>
</feature>
<feature type="binding site" evidence="1">
    <location>
        <position position="214"/>
    </location>
    <ligand>
        <name>substrate</name>
    </ligand>
</feature>
<feature type="binding site" evidence="1">
    <location>
        <begin position="235"/>
        <end position="238"/>
    </location>
    <ligand>
        <name>substrate</name>
    </ligand>
</feature>
<accession>Q17449</accession>
<accession>H2KY70</accession>
<organism>
    <name type="scientific">Caenorhabditis elegans</name>
    <dbReference type="NCBI Taxonomy" id="6239"/>
    <lineage>
        <taxon>Eukaryota</taxon>
        <taxon>Metazoa</taxon>
        <taxon>Ecdysozoa</taxon>
        <taxon>Nematoda</taxon>
        <taxon>Chromadorea</taxon>
        <taxon>Rhabditida</taxon>
        <taxon>Rhabditina</taxon>
        <taxon>Rhabditomorpha</taxon>
        <taxon>Rhabditoidea</taxon>
        <taxon>Rhabditidae</taxon>
        <taxon>Peloderinae</taxon>
        <taxon>Caenorhabditis</taxon>
    </lineage>
</organism>
<reference key="1">
    <citation type="journal article" date="1998" name="Science">
        <title>Genome sequence of the nematode C. elegans: a platform for investigating biology.</title>
        <authorList>
            <consortium name="The C. elegans sequencing consortium"/>
        </authorList>
    </citation>
    <scope>NUCLEOTIDE SEQUENCE [LARGE SCALE GENOMIC DNA]</scope>
    <source>
        <strain>Bristol N2</strain>
    </source>
</reference>
<reference key="2">
    <citation type="journal article" date="2011" name="Nature">
        <title>N-acylethanolamine signalling mediates the effect of diet on lifespan in Caenorhabditis elegans.</title>
        <authorList>
            <person name="Lucanic M."/>
            <person name="Held J.M."/>
            <person name="Vantipalli M.C."/>
            <person name="Klang I.M."/>
            <person name="Graham J.B."/>
            <person name="Gibson B.W."/>
            <person name="Lithgow G.J."/>
            <person name="Gill M.S."/>
        </authorList>
    </citation>
    <scope>FUNCTION</scope>
    <scope>CATALYTIC ACTIVITY</scope>
    <scope>TISSUE SPECIFICITY</scope>
</reference>
<reference key="3">
    <citation type="journal article" date="2012" name="Nat. Commun.">
        <title>Endocannabinoid-Goalpha signalling inhibits axon regeneration in Caenorhabditis elegans by antagonizing Gqalpha-PKC-JNK signalling.</title>
        <authorList>
            <person name="Pastuhov S.I."/>
            <person name="Fujiki K."/>
            <person name="Nix P."/>
            <person name="Kanao S."/>
            <person name="Bastiani M."/>
            <person name="Matsumoto K."/>
            <person name="Hisamoto N."/>
        </authorList>
    </citation>
    <scope>FUNCTION</scope>
    <scope>TISSUE SPECIFICITY</scope>
    <scope>DISRUPTION PHENOTYPE</scope>
</reference>
<reference key="4">
    <citation type="journal article" date="2019" name="Nat. Chem. Biol.">
        <title>Pharmacological convergence reveals a lipid pathway that regulates C. elegans lifespan.</title>
        <authorList>
            <person name="Chen A.L."/>
            <person name="Lum K.M."/>
            <person name="Lara-Gonzalez P."/>
            <person name="Ogasawara D."/>
            <person name="Cognetta A.B. III"/>
            <person name="To A."/>
            <person name="Parsons W.H."/>
            <person name="Simon G.M."/>
            <person name="Desai A."/>
            <person name="Petrascheck M."/>
            <person name="Bar-Peled L."/>
            <person name="Cravatt B.F."/>
        </authorList>
    </citation>
    <scope>FUNCTION</scope>
    <scope>CATALYTIC ACTIVITY</scope>
    <scope>BIOPHYSICOCHEMICAL PROPERTIES</scope>
</reference>
<keyword id="KW-0175">Coiled coil</keyword>
<keyword id="KW-0378">Hydrolase</keyword>
<keyword id="KW-0442">Lipid degradation</keyword>
<keyword id="KW-0443">Lipid metabolism</keyword>
<keyword id="KW-0597">Phosphoprotein</keyword>
<keyword id="KW-1185">Reference proteome</keyword>
<keyword id="KW-0732">Signal</keyword>